<keyword id="KW-0244">Early protein</keyword>
<comment type="similarity">
    <text evidence="1">Belongs to the papillomaviridae E5 protein family.</text>
</comment>
<sequence>LYRHIVTIAVFIILLFVLCLCVCLVLCCLLPLLLSQYVFAAALLLILCFWFVVATSQLTTFFVYLIFFYLPCLLLHLYTFLLLQ</sequence>
<dbReference type="EMBL" id="M62877">
    <property type="status" value="NOT_ANNOTATED_CDS"/>
    <property type="molecule type" value="Genomic_DNA"/>
</dbReference>
<dbReference type="PIR" id="D40415">
    <property type="entry name" value="W5WL51"/>
</dbReference>
<dbReference type="Proteomes" id="UP000009125">
    <property type="component" value="Segment"/>
</dbReference>
<dbReference type="InterPro" id="IPR004270">
    <property type="entry name" value="Papilloma_E5_alpha"/>
</dbReference>
<dbReference type="Pfam" id="PF03025">
    <property type="entry name" value="Papilloma_E5"/>
    <property type="match status" value="1"/>
</dbReference>
<name>VE5_HPV51</name>
<accession>P26553</accession>
<protein>
    <recommendedName>
        <fullName>Probable protein E5</fullName>
    </recommendedName>
</protein>
<gene>
    <name type="primary">E5</name>
</gene>
<organismHost>
    <name type="scientific">Homo sapiens</name>
    <name type="common">Human</name>
    <dbReference type="NCBI Taxonomy" id="9606"/>
</organismHost>
<reference key="1">
    <citation type="journal article" date="1991" name="J. Virol.">
        <title>Biologic properties and nucleotide sequence analysis of human papillomavirus type 51.</title>
        <authorList>
            <person name="Lungu O."/>
            <person name="Crum C.P."/>
            <person name="Silverstein S.J."/>
        </authorList>
    </citation>
    <scope>NUCLEOTIDE SEQUENCE [GENOMIC DNA]</scope>
</reference>
<evidence type="ECO:0000305" key="1"/>
<feature type="chain" id="PRO_0000133297" description="Probable protein E5">
    <location>
        <begin position="1"/>
        <end position="84"/>
    </location>
</feature>
<proteinExistence type="inferred from homology"/>
<organism>
    <name type="scientific">Human papillomavirus 51</name>
    <dbReference type="NCBI Taxonomy" id="10595"/>
    <lineage>
        <taxon>Viruses</taxon>
        <taxon>Monodnaviria</taxon>
        <taxon>Shotokuvirae</taxon>
        <taxon>Cossaviricota</taxon>
        <taxon>Papovaviricetes</taxon>
        <taxon>Zurhausenvirales</taxon>
        <taxon>Papillomaviridae</taxon>
        <taxon>Firstpapillomavirinae</taxon>
        <taxon>Alphapapillomavirus</taxon>
        <taxon>Alphapapillomavirus 5</taxon>
    </lineage>
</organism>